<dbReference type="EC" id="3.4.24.-"/>
<dbReference type="EMBL" id="AL123456">
    <property type="protein sequence ID" value="CCP45671.1"/>
    <property type="molecule type" value="Genomic_DNA"/>
</dbReference>
<dbReference type="PIR" id="G70886">
    <property type="entry name" value="G70886"/>
</dbReference>
<dbReference type="SMR" id="P9WHS3"/>
<dbReference type="FunCoup" id="P9WHS3">
    <property type="interactions" value="129"/>
</dbReference>
<dbReference type="STRING" id="83332.Rv2869c"/>
<dbReference type="PaxDb" id="83332-Rv2869c"/>
<dbReference type="DNASU" id="887449"/>
<dbReference type="KEGG" id="mtu:Rv2869c"/>
<dbReference type="KEGG" id="mtv:RVBD_2869c"/>
<dbReference type="TubercuList" id="Rv2869c"/>
<dbReference type="eggNOG" id="COG0750">
    <property type="taxonomic scope" value="Bacteria"/>
</dbReference>
<dbReference type="InParanoid" id="P9WHS3"/>
<dbReference type="OrthoDB" id="9782003at2"/>
<dbReference type="PhylomeDB" id="P9WHS3"/>
<dbReference type="Proteomes" id="UP000001584">
    <property type="component" value="Chromosome"/>
</dbReference>
<dbReference type="GO" id="GO:0005886">
    <property type="term" value="C:plasma membrane"/>
    <property type="evidence" value="ECO:0007669"/>
    <property type="project" value="UniProtKB-SubCell"/>
</dbReference>
<dbReference type="GO" id="GO:0004175">
    <property type="term" value="F:endopeptidase activity"/>
    <property type="evidence" value="ECO:0000314"/>
    <property type="project" value="UniProtKB"/>
</dbReference>
<dbReference type="GO" id="GO:0046872">
    <property type="term" value="F:metal ion binding"/>
    <property type="evidence" value="ECO:0007669"/>
    <property type="project" value="UniProtKB-KW"/>
</dbReference>
<dbReference type="GO" id="GO:0004222">
    <property type="term" value="F:metalloendopeptidase activity"/>
    <property type="evidence" value="ECO:0007669"/>
    <property type="project" value="InterPro"/>
</dbReference>
<dbReference type="GO" id="GO:0006508">
    <property type="term" value="P:proteolysis"/>
    <property type="evidence" value="ECO:0000314"/>
    <property type="project" value="UniProtKB"/>
</dbReference>
<dbReference type="CDD" id="cd06163">
    <property type="entry name" value="S2P-M50_PDZ_RseP-like"/>
    <property type="match status" value="1"/>
</dbReference>
<dbReference type="Gene3D" id="2.30.42.10">
    <property type="match status" value="1"/>
</dbReference>
<dbReference type="InterPro" id="IPR001478">
    <property type="entry name" value="PDZ"/>
</dbReference>
<dbReference type="InterPro" id="IPR041489">
    <property type="entry name" value="PDZ_6"/>
</dbReference>
<dbReference type="InterPro" id="IPR036034">
    <property type="entry name" value="PDZ_sf"/>
</dbReference>
<dbReference type="InterPro" id="IPR004387">
    <property type="entry name" value="Pept_M50_Zn"/>
</dbReference>
<dbReference type="InterPro" id="IPR008915">
    <property type="entry name" value="Peptidase_M50"/>
</dbReference>
<dbReference type="PANTHER" id="PTHR42837:SF2">
    <property type="entry name" value="MEMBRANE METALLOPROTEASE ARASP2, CHLOROPLASTIC-RELATED"/>
    <property type="match status" value="1"/>
</dbReference>
<dbReference type="PANTHER" id="PTHR42837">
    <property type="entry name" value="REGULATOR OF SIGMA-E PROTEASE RSEP"/>
    <property type="match status" value="1"/>
</dbReference>
<dbReference type="Pfam" id="PF17820">
    <property type="entry name" value="PDZ_6"/>
    <property type="match status" value="1"/>
</dbReference>
<dbReference type="Pfam" id="PF02163">
    <property type="entry name" value="Peptidase_M50"/>
    <property type="match status" value="1"/>
</dbReference>
<dbReference type="SMART" id="SM00228">
    <property type="entry name" value="PDZ"/>
    <property type="match status" value="1"/>
</dbReference>
<dbReference type="SUPFAM" id="SSF50156">
    <property type="entry name" value="PDZ domain-like"/>
    <property type="match status" value="1"/>
</dbReference>
<dbReference type="PROSITE" id="PS50106">
    <property type="entry name" value="PDZ"/>
    <property type="match status" value="1"/>
</dbReference>
<accession>P9WHS3</accession>
<accession>L0TB42</accession>
<accession>O33351</accession>
<feature type="chain" id="PRO_0000088449" description="Zinc metalloprotease Rip1">
    <location>
        <begin position="1"/>
        <end position="404"/>
    </location>
</feature>
<feature type="transmembrane region" description="Helical" evidence="2">
    <location>
        <begin position="1"/>
        <end position="21"/>
    </location>
</feature>
<feature type="transmembrane region" description="Helical" evidence="2">
    <location>
        <begin position="104"/>
        <end position="124"/>
    </location>
</feature>
<feature type="transmembrane region" description="Helical" evidence="2">
    <location>
        <begin position="313"/>
        <end position="333"/>
    </location>
</feature>
<feature type="transmembrane region" description="Helical" evidence="2">
    <location>
        <begin position="373"/>
        <end position="393"/>
    </location>
</feature>
<feature type="domain" description="PDZ" evidence="3">
    <location>
        <begin position="121"/>
        <end position="203"/>
    </location>
</feature>
<feature type="active site" evidence="2">
    <location>
        <position position="22"/>
    </location>
</feature>
<feature type="binding site" evidence="1">
    <location>
        <position position="21"/>
    </location>
    <ligand>
        <name>Zn(2+)</name>
        <dbReference type="ChEBI" id="CHEBI:29105"/>
        <note>catalytic</note>
    </ligand>
</feature>
<feature type="binding site" evidence="1">
    <location>
        <position position="25"/>
    </location>
    <ligand>
        <name>Zn(2+)</name>
        <dbReference type="ChEBI" id="CHEBI:29105"/>
        <note>catalytic</note>
    </ligand>
</feature>
<feature type="binding site" evidence="1">
    <location>
        <position position="202"/>
    </location>
    <ligand>
        <name>Zn(2+)</name>
        <dbReference type="ChEBI" id="CHEBI:29105"/>
        <note>catalytic</note>
    </ligand>
</feature>
<feature type="mutagenesis site" description="Loss of PbpB (PBP3, FtsI) processing." evidence="4">
    <location>
        <begin position="21"/>
        <end position="25"/>
    </location>
</feature>
<feature type="mutagenesis site" description="No effect on PbpB (PBP3, FtsI) processing." evidence="4">
    <original>H</original>
    <variation>A</variation>
    <location>
        <position position="21"/>
    </location>
</feature>
<feature type="mutagenesis site" description="No effect on PbpB (PBP3, FtsI) processing." evidence="4">
    <original>E</original>
    <variation>G</variation>
    <location>
        <position position="22"/>
    </location>
</feature>
<feature type="mutagenesis site" description="No effect on PbpB (PBP3, FtsI) processing." evidence="4">
    <original>H</original>
    <variation>A</variation>
    <location>
        <position position="25"/>
    </location>
</feature>
<evidence type="ECO:0000250" key="1"/>
<evidence type="ECO:0000255" key="2"/>
<evidence type="ECO:0000255" key="3">
    <source>
        <dbReference type="PROSITE-ProRule" id="PRU00143"/>
    </source>
</evidence>
<evidence type="ECO:0000269" key="4">
    <source>
    </source>
</evidence>
<evidence type="ECO:0000305" key="5"/>
<evidence type="ECO:0000305" key="6">
    <source>
    </source>
</evidence>
<keyword id="KW-1003">Cell membrane</keyword>
<keyword id="KW-0378">Hydrolase</keyword>
<keyword id="KW-0472">Membrane</keyword>
<keyword id="KW-0479">Metal-binding</keyword>
<keyword id="KW-0482">Metalloprotease</keyword>
<keyword id="KW-0645">Protease</keyword>
<keyword id="KW-1185">Reference proteome</keyword>
<keyword id="KW-0812">Transmembrane</keyword>
<keyword id="KW-1133">Transmembrane helix</keyword>
<keyword id="KW-0862">Zinc</keyword>
<sequence length="404" mass="42834">MMFVTGIVLFALAILISVALHECGHMWVARRTGMKVRRYFVGFGPTLWSTRRGETEYGVKAVPLGGFCDIAGMTPVEELDPDERDRAMYKQATWKRVAVLFAGPGMNLAICLVLIYAIALVWGLPNLHPPTRAVIGETGCVAQEVSQGKLEQCTGPGPAALAGIRSGDVVVKVGDTPVSSFDEMAAAVRKSHGSVPIVVERDGTAIVTYVDIESTQRWIPNGQGGELQPATVGAIGVGAARVGPVRYGVFSAMPATFAVTGDLTVEVGKALAALPTKVGALVRAIGGGQRDPQTPISVVGASIIGGDTVDHGLWVAFWFFLAQLNLILAAINLLPLLPFDGGHIAVAVFERIRNMVRSARGKVAAAPVNYLKLLPATYVVLVLVVGYMLLTVTADLVNPIRLFQ</sequence>
<gene>
    <name type="primary">rip1</name>
    <name type="ordered locus">Rv2869c</name>
    <name type="ORF">MTV003.15c</name>
</gene>
<protein>
    <recommendedName>
        <fullName>Zinc metalloprotease Rip1</fullName>
        <ecNumber>3.4.24.-</ecNumber>
    </recommendedName>
    <alternativeName>
        <fullName>Regulator of sigma KLM proteases</fullName>
    </alternativeName>
    <alternativeName>
        <fullName>S2P endopeptidase</fullName>
    </alternativeName>
    <alternativeName>
        <fullName>Site-2 protease Rip1</fullName>
        <shortName>S2P protease Rip1</shortName>
    </alternativeName>
    <alternativeName>
        <fullName>Site-2-type intramembrane protease</fullName>
    </alternativeName>
</protein>
<organism>
    <name type="scientific">Mycobacterium tuberculosis (strain ATCC 25618 / H37Rv)</name>
    <dbReference type="NCBI Taxonomy" id="83332"/>
    <lineage>
        <taxon>Bacteria</taxon>
        <taxon>Bacillati</taxon>
        <taxon>Actinomycetota</taxon>
        <taxon>Actinomycetes</taxon>
        <taxon>Mycobacteriales</taxon>
        <taxon>Mycobacteriaceae</taxon>
        <taxon>Mycobacterium</taxon>
        <taxon>Mycobacterium tuberculosis complex</taxon>
    </lineage>
</organism>
<proteinExistence type="evidence at protein level"/>
<name>RIP1_MYCTU</name>
<comment type="function">
    <text evidence="4">A probable intramembrane site-2 protease (S2P) that cleaves type-2 transmembrane proteins within their membrane-spanning domains. Cleaves PbpB (PBP3, FtsI) near 'Ala-102' and 'Ala-103' in response to oxidative stress; cleavage is inhibited by Wag31-PbpB interaction. Probably also cleaves anti-sigma factors RskA, RslA and RsmA but not RsdA.</text>
</comment>
<comment type="function">
    <text evidence="4">Regulated intramembrane proteolysis (RIP) occurs when an extracytoplasmic signal (possibly oxidative stress) triggers a concerted proteolytic cascade to transmit information and elicit cellular responses. The membrane-spanning regulatory substrate protein (includes anti-sigma factors RskA, RslA, RsmA, and PbpB in M.tuberculosis) is first cut extracytoplasmically (site-1 protease, S1P), then within the membrane itself (site-2 protease, S2P, this entry), while cytoplasmic proteases finish degrading the regulatory protein, liberating the effector protein (ECF sigma factors SigK, SigL and SigM).</text>
</comment>
<comment type="cofactor">
    <cofactor evidence="6">
        <name>Zn(2+)</name>
        <dbReference type="ChEBI" id="CHEBI:29105"/>
    </cofactor>
</comment>
<comment type="activity regulation">
    <text evidence="4">Inhibited by metal chelator o-phenanthroline.</text>
</comment>
<comment type="subcellular location">
    <subcellularLocation>
        <location evidence="5">Cell membrane</location>
        <topology evidence="5">Multi-pass membrane protein</topology>
    </subcellularLocation>
</comment>
<comment type="miscellaneous">
    <text>Was identified as a high-confidence drug target.</text>
</comment>
<comment type="similarity">
    <text evidence="5">Belongs to the peptidase M50B family.</text>
</comment>
<reference key="1">
    <citation type="journal article" date="1998" name="Nature">
        <title>Deciphering the biology of Mycobacterium tuberculosis from the complete genome sequence.</title>
        <authorList>
            <person name="Cole S.T."/>
            <person name="Brosch R."/>
            <person name="Parkhill J."/>
            <person name="Garnier T."/>
            <person name="Churcher C.M."/>
            <person name="Harris D.E."/>
            <person name="Gordon S.V."/>
            <person name="Eiglmeier K."/>
            <person name="Gas S."/>
            <person name="Barry C.E. III"/>
            <person name="Tekaia F."/>
            <person name="Badcock K."/>
            <person name="Basham D."/>
            <person name="Brown D."/>
            <person name="Chillingworth T."/>
            <person name="Connor R."/>
            <person name="Davies R.M."/>
            <person name="Devlin K."/>
            <person name="Feltwell T."/>
            <person name="Gentles S."/>
            <person name="Hamlin N."/>
            <person name="Holroyd S."/>
            <person name="Hornsby T."/>
            <person name="Jagels K."/>
            <person name="Krogh A."/>
            <person name="McLean J."/>
            <person name="Moule S."/>
            <person name="Murphy L.D."/>
            <person name="Oliver S."/>
            <person name="Osborne J."/>
            <person name="Quail M.A."/>
            <person name="Rajandream M.A."/>
            <person name="Rogers J."/>
            <person name="Rutter S."/>
            <person name="Seeger K."/>
            <person name="Skelton S."/>
            <person name="Squares S."/>
            <person name="Squares R."/>
            <person name="Sulston J.E."/>
            <person name="Taylor K."/>
            <person name="Whitehead S."/>
            <person name="Barrell B.G."/>
        </authorList>
    </citation>
    <scope>NUCLEOTIDE SEQUENCE [LARGE SCALE GENOMIC DNA]</scope>
    <source>
        <strain>ATCC 25618 / H37Rv</strain>
    </source>
</reference>
<reference key="2">
    <citation type="journal article" date="2008" name="BMC Syst. Biol.">
        <title>targetTB: a target identification pipeline for Mycobacterium tuberculosis through an interactome, reactome and genome-scale structural analysis.</title>
        <authorList>
            <person name="Raman K."/>
            <person name="Yeturu K."/>
            <person name="Chandra N."/>
        </authorList>
    </citation>
    <scope>IDENTIFICATION AS A DRUG TARGET [LARGE SCALE ANALYSIS]</scope>
</reference>
<reference key="3">
    <citation type="journal article" date="2009" name="Mol. Microbiol.">
        <title>Novel role of Wag31 in protection of mycobacteria under oxidative stress.</title>
        <authorList>
            <person name="Mukherjee P."/>
            <person name="Sureka K."/>
            <person name="Datta P."/>
            <person name="Hossain T."/>
            <person name="Barik S."/>
            <person name="Das K.P."/>
            <person name="Kundu M."/>
            <person name="Basu J."/>
        </authorList>
    </citation>
    <scope>FUNCTION</scope>
    <scope>SUBSTRATE</scope>
    <scope>COFACTOR</scope>
    <scope>ACTIVITY REGULATION</scope>
    <scope>MUTAGENESIS OF HIS-21; 21-HIS--HIS-25; GLU-22 AND HIS-25</scope>
    <source>
        <strain>ATCC 25618 / H37Rv</strain>
    </source>
</reference>
<reference key="4">
    <citation type="journal article" date="2011" name="Mol. Cell. Proteomics">
        <title>Proteogenomic analysis of Mycobacterium tuberculosis by high resolution mass spectrometry.</title>
        <authorList>
            <person name="Kelkar D.S."/>
            <person name="Kumar D."/>
            <person name="Kumar P."/>
            <person name="Balakrishnan L."/>
            <person name="Muthusamy B."/>
            <person name="Yadav A.K."/>
            <person name="Shrivastava P."/>
            <person name="Marimuthu A."/>
            <person name="Anand S."/>
            <person name="Sundaram H."/>
            <person name="Kingsbury R."/>
            <person name="Harsha H.C."/>
            <person name="Nair B."/>
            <person name="Prasad T.S."/>
            <person name="Chauhan D.S."/>
            <person name="Katoch K."/>
            <person name="Katoch V.M."/>
            <person name="Kumar P."/>
            <person name="Chaerkady R."/>
            <person name="Ramachandran S."/>
            <person name="Dash D."/>
            <person name="Pandey A."/>
        </authorList>
    </citation>
    <scope>IDENTIFICATION BY MASS SPECTROMETRY [LARGE SCALE ANALYSIS]</scope>
    <source>
        <strain>ATCC 25618 / H37Rv</strain>
    </source>
</reference>